<organism>
    <name type="scientific">Streptomyces avermitilis (strain ATCC 31267 / DSM 46492 / JCM 5070 / NBRC 14893 / NCIMB 12804 / NRRL 8165 / MA-4680)</name>
    <dbReference type="NCBI Taxonomy" id="227882"/>
    <lineage>
        <taxon>Bacteria</taxon>
        <taxon>Bacillati</taxon>
        <taxon>Actinomycetota</taxon>
        <taxon>Actinomycetes</taxon>
        <taxon>Kitasatosporales</taxon>
        <taxon>Streptomycetaceae</taxon>
        <taxon>Streptomyces</taxon>
    </lineage>
</organism>
<dbReference type="EC" id="2.7.1.30" evidence="1"/>
<dbReference type="EMBL" id="BA000030">
    <property type="protein sequence ID" value="BAC74375.1"/>
    <property type="molecule type" value="Genomic_DNA"/>
</dbReference>
<dbReference type="SMR" id="Q828K5"/>
<dbReference type="GeneID" id="41543735"/>
<dbReference type="KEGG" id="sma:SAVERM_6664"/>
<dbReference type="eggNOG" id="COG0554">
    <property type="taxonomic scope" value="Bacteria"/>
</dbReference>
<dbReference type="HOGENOM" id="CLU_009281_2_3_11"/>
<dbReference type="OrthoDB" id="9805576at2"/>
<dbReference type="UniPathway" id="UPA00618">
    <property type="reaction ID" value="UER00672"/>
</dbReference>
<dbReference type="Proteomes" id="UP000000428">
    <property type="component" value="Chromosome"/>
</dbReference>
<dbReference type="GO" id="GO:0005829">
    <property type="term" value="C:cytosol"/>
    <property type="evidence" value="ECO:0007669"/>
    <property type="project" value="TreeGrafter"/>
</dbReference>
<dbReference type="GO" id="GO:0005524">
    <property type="term" value="F:ATP binding"/>
    <property type="evidence" value="ECO:0007669"/>
    <property type="project" value="UniProtKB-UniRule"/>
</dbReference>
<dbReference type="GO" id="GO:0004370">
    <property type="term" value="F:glycerol kinase activity"/>
    <property type="evidence" value="ECO:0000250"/>
    <property type="project" value="UniProtKB"/>
</dbReference>
<dbReference type="GO" id="GO:0019563">
    <property type="term" value="P:glycerol catabolic process"/>
    <property type="evidence" value="ECO:0007669"/>
    <property type="project" value="UniProtKB-UniRule"/>
</dbReference>
<dbReference type="GO" id="GO:0006071">
    <property type="term" value="P:glycerol metabolic process"/>
    <property type="evidence" value="ECO:0000250"/>
    <property type="project" value="UniProtKB"/>
</dbReference>
<dbReference type="GO" id="GO:0006072">
    <property type="term" value="P:glycerol-3-phosphate metabolic process"/>
    <property type="evidence" value="ECO:0007669"/>
    <property type="project" value="InterPro"/>
</dbReference>
<dbReference type="CDD" id="cd07769">
    <property type="entry name" value="ASKHA_NBD_FGGY_GK"/>
    <property type="match status" value="1"/>
</dbReference>
<dbReference type="FunFam" id="3.30.420.40:FF:000007">
    <property type="entry name" value="Glycerol kinase"/>
    <property type="match status" value="1"/>
</dbReference>
<dbReference type="FunFam" id="3.30.420.40:FF:000008">
    <property type="entry name" value="Glycerol kinase"/>
    <property type="match status" value="1"/>
</dbReference>
<dbReference type="Gene3D" id="3.30.420.40">
    <property type="match status" value="2"/>
</dbReference>
<dbReference type="HAMAP" id="MF_00186">
    <property type="entry name" value="Glycerol_kin"/>
    <property type="match status" value="1"/>
</dbReference>
<dbReference type="InterPro" id="IPR043129">
    <property type="entry name" value="ATPase_NBD"/>
</dbReference>
<dbReference type="InterPro" id="IPR000577">
    <property type="entry name" value="Carb_kinase_FGGY"/>
</dbReference>
<dbReference type="InterPro" id="IPR018483">
    <property type="entry name" value="Carb_kinase_FGGY_CS"/>
</dbReference>
<dbReference type="InterPro" id="IPR018485">
    <property type="entry name" value="FGGY_C"/>
</dbReference>
<dbReference type="InterPro" id="IPR018484">
    <property type="entry name" value="FGGY_N"/>
</dbReference>
<dbReference type="InterPro" id="IPR005999">
    <property type="entry name" value="Glycerol_kin"/>
</dbReference>
<dbReference type="NCBIfam" id="TIGR01311">
    <property type="entry name" value="glycerol_kin"/>
    <property type="match status" value="1"/>
</dbReference>
<dbReference type="NCBIfam" id="NF000756">
    <property type="entry name" value="PRK00047.1"/>
    <property type="match status" value="1"/>
</dbReference>
<dbReference type="PANTHER" id="PTHR10196:SF69">
    <property type="entry name" value="GLYCEROL KINASE"/>
    <property type="match status" value="1"/>
</dbReference>
<dbReference type="PANTHER" id="PTHR10196">
    <property type="entry name" value="SUGAR KINASE"/>
    <property type="match status" value="1"/>
</dbReference>
<dbReference type="Pfam" id="PF02782">
    <property type="entry name" value="FGGY_C"/>
    <property type="match status" value="1"/>
</dbReference>
<dbReference type="Pfam" id="PF00370">
    <property type="entry name" value="FGGY_N"/>
    <property type="match status" value="1"/>
</dbReference>
<dbReference type="PIRSF" id="PIRSF000538">
    <property type="entry name" value="GlpK"/>
    <property type="match status" value="1"/>
</dbReference>
<dbReference type="SUPFAM" id="SSF53067">
    <property type="entry name" value="Actin-like ATPase domain"/>
    <property type="match status" value="2"/>
</dbReference>
<dbReference type="PROSITE" id="PS00445">
    <property type="entry name" value="FGGY_KINASES_2"/>
    <property type="match status" value="1"/>
</dbReference>
<comment type="function">
    <text evidence="1">Key enzyme in the regulation of glycerol uptake and metabolism. Catalyzes the phosphorylation of glycerol to yield sn-glycerol 3-phosphate.</text>
</comment>
<comment type="catalytic activity">
    <reaction evidence="1">
        <text>glycerol + ATP = sn-glycerol 3-phosphate + ADP + H(+)</text>
        <dbReference type="Rhea" id="RHEA:21644"/>
        <dbReference type="ChEBI" id="CHEBI:15378"/>
        <dbReference type="ChEBI" id="CHEBI:17754"/>
        <dbReference type="ChEBI" id="CHEBI:30616"/>
        <dbReference type="ChEBI" id="CHEBI:57597"/>
        <dbReference type="ChEBI" id="CHEBI:456216"/>
        <dbReference type="EC" id="2.7.1.30"/>
    </reaction>
</comment>
<comment type="activity regulation">
    <text evidence="1">Inhibited by fructose 1,6-bisphosphate (FBP).</text>
</comment>
<comment type="pathway">
    <text evidence="1">Polyol metabolism; glycerol degradation via glycerol kinase pathway; sn-glycerol 3-phosphate from glycerol: step 1/1.</text>
</comment>
<comment type="similarity">
    <text evidence="1">Belongs to the FGGY kinase family.</text>
</comment>
<sequence>MTDAHTAGPFIAAIDQGTTSSRCIVFDRDGRIVSVDQKEHEQIFPKPGWVEHNAAEIWTNVQEVVAGAVEKAGITRDDIKAIGITNQRETTLLWDKNTGEPVHNALVWQDTRTDALCKELGRNVGQDRFRRETGLPLASYFAGPKARWLLDNVEGLRERAEAGDILFGTMDTWVIWNLTGGVNGGKHVTDVTNASRTMLMNLHTMQWDDKIAESIGVPLAMLPEIRSSAEVYGEITGGKLGDLLGGIPVASALGDQQAALFGQTCFSEGEAKSTYGTGTFMLMNTGDKIINSYSGLLTTVGYQIGDQKPVYALEGSIAVTGSLVQWMRDQMGLIKSAAEIETLASSVEDNGGAYFVPAFSGLFAPYWRSDARGVIAGLTRYVTKAHIARAVLEATAWQTREITDAMTKDSGVELAALKVDGGMTSNNLLMQTLSDFLDAPVVRPMVAETTCLGAAYAAGLAVGFWTNTEDLRANWRRAAEWTPNMAAETRDREYKSWLKAVERTMGWIEDEE</sequence>
<reference key="1">
    <citation type="journal article" date="2001" name="Proc. Natl. Acad. Sci. U.S.A.">
        <title>Genome sequence of an industrial microorganism Streptomyces avermitilis: deducing the ability of producing secondary metabolites.</title>
        <authorList>
            <person name="Omura S."/>
            <person name="Ikeda H."/>
            <person name="Ishikawa J."/>
            <person name="Hanamoto A."/>
            <person name="Takahashi C."/>
            <person name="Shinose M."/>
            <person name="Takahashi Y."/>
            <person name="Horikawa H."/>
            <person name="Nakazawa H."/>
            <person name="Osonoe T."/>
            <person name="Kikuchi H."/>
            <person name="Shiba T."/>
            <person name="Sakaki Y."/>
            <person name="Hattori M."/>
        </authorList>
    </citation>
    <scope>NUCLEOTIDE SEQUENCE [LARGE SCALE GENOMIC DNA]</scope>
    <source>
        <strain>ATCC 31267 / DSM 46492 / JCM 5070 / NBRC 14893 / NCIMB 12804 / NRRL 8165 / MA-4680</strain>
    </source>
</reference>
<reference key="2">
    <citation type="journal article" date="2003" name="Nat. Biotechnol.">
        <title>Complete genome sequence and comparative analysis of the industrial microorganism Streptomyces avermitilis.</title>
        <authorList>
            <person name="Ikeda H."/>
            <person name="Ishikawa J."/>
            <person name="Hanamoto A."/>
            <person name="Shinose M."/>
            <person name="Kikuchi H."/>
            <person name="Shiba T."/>
            <person name="Sakaki Y."/>
            <person name="Hattori M."/>
            <person name="Omura S."/>
        </authorList>
    </citation>
    <scope>NUCLEOTIDE SEQUENCE [LARGE SCALE GENOMIC DNA]</scope>
    <source>
        <strain>ATCC 31267 / DSM 46492 / JCM 5070 / NBRC 14893 / NCIMB 12804 / NRRL 8165 / MA-4680</strain>
    </source>
</reference>
<accession>Q828K5</accession>
<gene>
    <name evidence="1" type="primary">glpK1</name>
    <name type="ordered locus">SAV_6664</name>
</gene>
<evidence type="ECO:0000255" key="1">
    <source>
        <dbReference type="HAMAP-Rule" id="MF_00186"/>
    </source>
</evidence>
<proteinExistence type="inferred from homology"/>
<protein>
    <recommendedName>
        <fullName evidence="1">Glycerol kinase 1</fullName>
        <ecNumber evidence="1">2.7.1.30</ecNumber>
    </recommendedName>
    <alternativeName>
        <fullName evidence="1">ATP:glycerol 3-phosphotransferase 1</fullName>
    </alternativeName>
    <alternativeName>
        <fullName evidence="1">Glycerokinase 1</fullName>
        <shortName evidence="1">GK 1</shortName>
    </alternativeName>
</protein>
<name>GLPK1_STRAW</name>
<keyword id="KW-0067">ATP-binding</keyword>
<keyword id="KW-0319">Glycerol metabolism</keyword>
<keyword id="KW-0418">Kinase</keyword>
<keyword id="KW-0547">Nucleotide-binding</keyword>
<keyword id="KW-1185">Reference proteome</keyword>
<keyword id="KW-0808">Transferase</keyword>
<feature type="chain" id="PRO_0000059499" description="Glycerol kinase 1">
    <location>
        <begin position="1"/>
        <end position="512"/>
    </location>
</feature>
<feature type="binding site" evidence="1">
    <location>
        <position position="18"/>
    </location>
    <ligand>
        <name>ADP</name>
        <dbReference type="ChEBI" id="CHEBI:456216"/>
    </ligand>
</feature>
<feature type="binding site" evidence="1">
    <location>
        <position position="18"/>
    </location>
    <ligand>
        <name>ATP</name>
        <dbReference type="ChEBI" id="CHEBI:30616"/>
    </ligand>
</feature>
<feature type="binding site" evidence="1">
    <location>
        <position position="18"/>
    </location>
    <ligand>
        <name>sn-glycerol 3-phosphate</name>
        <dbReference type="ChEBI" id="CHEBI:57597"/>
    </ligand>
</feature>
<feature type="binding site" evidence="1">
    <location>
        <position position="19"/>
    </location>
    <ligand>
        <name>ATP</name>
        <dbReference type="ChEBI" id="CHEBI:30616"/>
    </ligand>
</feature>
<feature type="binding site" evidence="1">
    <location>
        <position position="20"/>
    </location>
    <ligand>
        <name>ATP</name>
        <dbReference type="ChEBI" id="CHEBI:30616"/>
    </ligand>
</feature>
<feature type="binding site" evidence="1">
    <location>
        <position position="22"/>
    </location>
    <ligand>
        <name>ADP</name>
        <dbReference type="ChEBI" id="CHEBI:456216"/>
    </ligand>
</feature>
<feature type="binding site" evidence="1">
    <location>
        <position position="88"/>
    </location>
    <ligand>
        <name>glycerol</name>
        <dbReference type="ChEBI" id="CHEBI:17754"/>
    </ligand>
</feature>
<feature type="binding site" evidence="1">
    <location>
        <position position="88"/>
    </location>
    <ligand>
        <name>sn-glycerol 3-phosphate</name>
        <dbReference type="ChEBI" id="CHEBI:57597"/>
    </ligand>
</feature>
<feature type="binding site" evidence="1">
    <location>
        <position position="89"/>
    </location>
    <ligand>
        <name>glycerol</name>
        <dbReference type="ChEBI" id="CHEBI:17754"/>
    </ligand>
</feature>
<feature type="binding site" evidence="1">
    <location>
        <position position="89"/>
    </location>
    <ligand>
        <name>sn-glycerol 3-phosphate</name>
        <dbReference type="ChEBI" id="CHEBI:57597"/>
    </ligand>
</feature>
<feature type="binding site" evidence="1">
    <location>
        <position position="140"/>
    </location>
    <ligand>
        <name>glycerol</name>
        <dbReference type="ChEBI" id="CHEBI:17754"/>
    </ligand>
</feature>
<feature type="binding site" evidence="1">
    <location>
        <position position="140"/>
    </location>
    <ligand>
        <name>sn-glycerol 3-phosphate</name>
        <dbReference type="ChEBI" id="CHEBI:57597"/>
    </ligand>
</feature>
<feature type="binding site" evidence="1">
    <location>
        <position position="255"/>
    </location>
    <ligand>
        <name>glycerol</name>
        <dbReference type="ChEBI" id="CHEBI:17754"/>
    </ligand>
</feature>
<feature type="binding site" evidence="1">
    <location>
        <position position="255"/>
    </location>
    <ligand>
        <name>sn-glycerol 3-phosphate</name>
        <dbReference type="ChEBI" id="CHEBI:57597"/>
    </ligand>
</feature>
<feature type="binding site" evidence="1">
    <location>
        <position position="256"/>
    </location>
    <ligand>
        <name>glycerol</name>
        <dbReference type="ChEBI" id="CHEBI:17754"/>
    </ligand>
</feature>
<feature type="binding site" evidence="1">
    <location>
        <position position="277"/>
    </location>
    <ligand>
        <name>ADP</name>
        <dbReference type="ChEBI" id="CHEBI:456216"/>
    </ligand>
</feature>
<feature type="binding site" evidence="1">
    <location>
        <position position="277"/>
    </location>
    <ligand>
        <name>ATP</name>
        <dbReference type="ChEBI" id="CHEBI:30616"/>
    </ligand>
</feature>
<feature type="binding site" evidence="1">
    <location>
        <position position="321"/>
    </location>
    <ligand>
        <name>ADP</name>
        <dbReference type="ChEBI" id="CHEBI:456216"/>
    </ligand>
</feature>
<feature type="binding site" evidence="1">
    <location>
        <position position="321"/>
    </location>
    <ligand>
        <name>ATP</name>
        <dbReference type="ChEBI" id="CHEBI:30616"/>
    </ligand>
</feature>
<feature type="binding site" evidence="1">
    <location>
        <position position="325"/>
    </location>
    <ligand>
        <name>ATP</name>
        <dbReference type="ChEBI" id="CHEBI:30616"/>
    </ligand>
</feature>
<feature type="binding site" evidence="1">
    <location>
        <position position="422"/>
    </location>
    <ligand>
        <name>ADP</name>
        <dbReference type="ChEBI" id="CHEBI:456216"/>
    </ligand>
</feature>
<feature type="binding site" evidence="1">
    <location>
        <position position="422"/>
    </location>
    <ligand>
        <name>ATP</name>
        <dbReference type="ChEBI" id="CHEBI:30616"/>
    </ligand>
</feature>
<feature type="binding site" evidence="1">
    <location>
        <position position="426"/>
    </location>
    <ligand>
        <name>ADP</name>
        <dbReference type="ChEBI" id="CHEBI:456216"/>
    </ligand>
</feature>